<feature type="chain" id="PRO_1000004320" description="UDP-N-acetylmuramate--L-alanine ligase">
    <location>
        <begin position="1"/>
        <end position="465"/>
    </location>
</feature>
<feature type="binding site" evidence="1">
    <location>
        <begin position="112"/>
        <end position="118"/>
    </location>
    <ligand>
        <name>ATP</name>
        <dbReference type="ChEBI" id="CHEBI:30616"/>
    </ligand>
</feature>
<organism>
    <name type="scientific">Burkholderia mallei (strain NCTC 10247)</name>
    <dbReference type="NCBI Taxonomy" id="320389"/>
    <lineage>
        <taxon>Bacteria</taxon>
        <taxon>Pseudomonadati</taxon>
        <taxon>Pseudomonadota</taxon>
        <taxon>Betaproteobacteria</taxon>
        <taxon>Burkholderiales</taxon>
        <taxon>Burkholderiaceae</taxon>
        <taxon>Burkholderia</taxon>
        <taxon>pseudomallei group</taxon>
    </lineage>
</organism>
<dbReference type="EC" id="6.3.2.8" evidence="1"/>
<dbReference type="EMBL" id="CP000548">
    <property type="protein sequence ID" value="ABO05957.1"/>
    <property type="molecule type" value="Genomic_DNA"/>
</dbReference>
<dbReference type="RefSeq" id="WP_004194319.1">
    <property type="nucleotide sequence ID" value="NZ_CP007802.1"/>
</dbReference>
<dbReference type="SMR" id="A3MR64"/>
<dbReference type="GeneID" id="92980242"/>
<dbReference type="KEGG" id="bmaz:BM44_136"/>
<dbReference type="KEGG" id="bmn:BMA10247_3233"/>
<dbReference type="PATRIC" id="fig|320389.8.peg.145"/>
<dbReference type="UniPathway" id="UPA00219"/>
<dbReference type="GO" id="GO:0005737">
    <property type="term" value="C:cytoplasm"/>
    <property type="evidence" value="ECO:0007669"/>
    <property type="project" value="UniProtKB-SubCell"/>
</dbReference>
<dbReference type="GO" id="GO:0005524">
    <property type="term" value="F:ATP binding"/>
    <property type="evidence" value="ECO:0007669"/>
    <property type="project" value="UniProtKB-UniRule"/>
</dbReference>
<dbReference type="GO" id="GO:0008763">
    <property type="term" value="F:UDP-N-acetylmuramate-L-alanine ligase activity"/>
    <property type="evidence" value="ECO:0007669"/>
    <property type="project" value="UniProtKB-UniRule"/>
</dbReference>
<dbReference type="GO" id="GO:0051301">
    <property type="term" value="P:cell division"/>
    <property type="evidence" value="ECO:0007669"/>
    <property type="project" value="UniProtKB-KW"/>
</dbReference>
<dbReference type="GO" id="GO:0071555">
    <property type="term" value="P:cell wall organization"/>
    <property type="evidence" value="ECO:0007669"/>
    <property type="project" value="UniProtKB-KW"/>
</dbReference>
<dbReference type="GO" id="GO:0009252">
    <property type="term" value="P:peptidoglycan biosynthetic process"/>
    <property type="evidence" value="ECO:0007669"/>
    <property type="project" value="UniProtKB-UniRule"/>
</dbReference>
<dbReference type="GO" id="GO:0008360">
    <property type="term" value="P:regulation of cell shape"/>
    <property type="evidence" value="ECO:0007669"/>
    <property type="project" value="UniProtKB-KW"/>
</dbReference>
<dbReference type="FunFam" id="3.40.1190.10:FF:000001">
    <property type="entry name" value="UDP-N-acetylmuramate--L-alanine ligase"/>
    <property type="match status" value="1"/>
</dbReference>
<dbReference type="Gene3D" id="3.90.190.20">
    <property type="entry name" value="Mur ligase, C-terminal domain"/>
    <property type="match status" value="1"/>
</dbReference>
<dbReference type="Gene3D" id="3.40.1190.10">
    <property type="entry name" value="Mur-like, catalytic domain"/>
    <property type="match status" value="1"/>
</dbReference>
<dbReference type="Gene3D" id="3.40.50.720">
    <property type="entry name" value="NAD(P)-binding Rossmann-like Domain"/>
    <property type="match status" value="1"/>
</dbReference>
<dbReference type="HAMAP" id="MF_00046">
    <property type="entry name" value="MurC"/>
    <property type="match status" value="1"/>
</dbReference>
<dbReference type="InterPro" id="IPR036565">
    <property type="entry name" value="Mur-like_cat_sf"/>
</dbReference>
<dbReference type="InterPro" id="IPR004101">
    <property type="entry name" value="Mur_ligase_C"/>
</dbReference>
<dbReference type="InterPro" id="IPR036615">
    <property type="entry name" value="Mur_ligase_C_dom_sf"/>
</dbReference>
<dbReference type="InterPro" id="IPR013221">
    <property type="entry name" value="Mur_ligase_cen"/>
</dbReference>
<dbReference type="InterPro" id="IPR000713">
    <property type="entry name" value="Mur_ligase_N"/>
</dbReference>
<dbReference type="InterPro" id="IPR050061">
    <property type="entry name" value="MurCDEF_pg_biosynth"/>
</dbReference>
<dbReference type="InterPro" id="IPR005758">
    <property type="entry name" value="UDP-N-AcMur_Ala_ligase_MurC"/>
</dbReference>
<dbReference type="NCBIfam" id="TIGR01082">
    <property type="entry name" value="murC"/>
    <property type="match status" value="1"/>
</dbReference>
<dbReference type="PANTHER" id="PTHR43445:SF3">
    <property type="entry name" value="UDP-N-ACETYLMURAMATE--L-ALANINE LIGASE"/>
    <property type="match status" value="1"/>
</dbReference>
<dbReference type="PANTHER" id="PTHR43445">
    <property type="entry name" value="UDP-N-ACETYLMURAMATE--L-ALANINE LIGASE-RELATED"/>
    <property type="match status" value="1"/>
</dbReference>
<dbReference type="Pfam" id="PF01225">
    <property type="entry name" value="Mur_ligase"/>
    <property type="match status" value="1"/>
</dbReference>
<dbReference type="Pfam" id="PF02875">
    <property type="entry name" value="Mur_ligase_C"/>
    <property type="match status" value="1"/>
</dbReference>
<dbReference type="Pfam" id="PF08245">
    <property type="entry name" value="Mur_ligase_M"/>
    <property type="match status" value="1"/>
</dbReference>
<dbReference type="SUPFAM" id="SSF51984">
    <property type="entry name" value="MurCD N-terminal domain"/>
    <property type="match status" value="1"/>
</dbReference>
<dbReference type="SUPFAM" id="SSF53623">
    <property type="entry name" value="MurD-like peptide ligases, catalytic domain"/>
    <property type="match status" value="1"/>
</dbReference>
<dbReference type="SUPFAM" id="SSF53244">
    <property type="entry name" value="MurD-like peptide ligases, peptide-binding domain"/>
    <property type="match status" value="1"/>
</dbReference>
<name>MURC_BURM7</name>
<evidence type="ECO:0000255" key="1">
    <source>
        <dbReference type="HAMAP-Rule" id="MF_00046"/>
    </source>
</evidence>
<gene>
    <name evidence="1" type="primary">murC</name>
    <name type="ordered locus">BMA10247_3233</name>
</gene>
<reference key="1">
    <citation type="journal article" date="2010" name="Genome Biol. Evol.">
        <title>Continuing evolution of Burkholderia mallei through genome reduction and large-scale rearrangements.</title>
        <authorList>
            <person name="Losada L."/>
            <person name="Ronning C.M."/>
            <person name="DeShazer D."/>
            <person name="Woods D."/>
            <person name="Fedorova N."/>
            <person name="Kim H.S."/>
            <person name="Shabalina S.A."/>
            <person name="Pearson T.R."/>
            <person name="Brinkac L."/>
            <person name="Tan P."/>
            <person name="Nandi T."/>
            <person name="Crabtree J."/>
            <person name="Badger J."/>
            <person name="Beckstrom-Sternberg S."/>
            <person name="Saqib M."/>
            <person name="Schutzer S.E."/>
            <person name="Keim P."/>
            <person name="Nierman W.C."/>
        </authorList>
    </citation>
    <scope>NUCLEOTIDE SEQUENCE [LARGE SCALE GENOMIC DNA]</scope>
    <source>
        <strain>NCTC 10247</strain>
    </source>
</reference>
<proteinExistence type="inferred from homology"/>
<keyword id="KW-0067">ATP-binding</keyword>
<keyword id="KW-0131">Cell cycle</keyword>
<keyword id="KW-0132">Cell division</keyword>
<keyword id="KW-0133">Cell shape</keyword>
<keyword id="KW-0961">Cell wall biogenesis/degradation</keyword>
<keyword id="KW-0963">Cytoplasm</keyword>
<keyword id="KW-0436">Ligase</keyword>
<keyword id="KW-0547">Nucleotide-binding</keyword>
<keyword id="KW-0573">Peptidoglycan synthesis</keyword>
<comment type="function">
    <text evidence="1">Cell wall formation.</text>
</comment>
<comment type="catalytic activity">
    <reaction evidence="1">
        <text>UDP-N-acetyl-alpha-D-muramate + L-alanine + ATP = UDP-N-acetyl-alpha-D-muramoyl-L-alanine + ADP + phosphate + H(+)</text>
        <dbReference type="Rhea" id="RHEA:23372"/>
        <dbReference type="ChEBI" id="CHEBI:15378"/>
        <dbReference type="ChEBI" id="CHEBI:30616"/>
        <dbReference type="ChEBI" id="CHEBI:43474"/>
        <dbReference type="ChEBI" id="CHEBI:57972"/>
        <dbReference type="ChEBI" id="CHEBI:70757"/>
        <dbReference type="ChEBI" id="CHEBI:83898"/>
        <dbReference type="ChEBI" id="CHEBI:456216"/>
        <dbReference type="EC" id="6.3.2.8"/>
    </reaction>
</comment>
<comment type="pathway">
    <text evidence="1">Cell wall biogenesis; peptidoglycan biosynthesis.</text>
</comment>
<comment type="subcellular location">
    <subcellularLocation>
        <location evidence="1">Cytoplasm</location>
    </subcellularLocation>
</comment>
<comment type="similarity">
    <text evidence="1">Belongs to the MurCDEF family.</text>
</comment>
<accession>A3MR64</accession>
<protein>
    <recommendedName>
        <fullName evidence="1">UDP-N-acetylmuramate--L-alanine ligase</fullName>
        <ecNumber evidence="1">6.3.2.8</ecNumber>
    </recommendedName>
    <alternativeName>
        <fullName evidence="1">UDP-N-acetylmuramoyl-L-alanine synthetase</fullName>
    </alternativeName>
</protein>
<sequence>MKHIVKHIHFVGIGGAGMSGIAEVLVNLGYQVSGSDLARNAVTERLEALGARVSIGHDAANIEGANAVVVSTAVRSDNPEVLAARRLRVPIVPRAVMLAELMRLKQGIAIAGTHGKTTTTSLVASVLAAGGLDPTFVIGGRLTSAGANARLGMGDFIVAEADESDASFLNLYPVIEVITNIDADHMDTYGHDFARLKQAFIEFTQRLPFYGSAVVCIDDANVRQIVPLISKPVVRYGFAADAQVRAENVEARDGRMHFTVRREGREPLPVVLNLPGLHNVQNALAAIAIATDLDVADAAIQQALAEFNGVGRRFQRYGEIAAAGGGAYTLIDDYGHHPVEMAATIAAARGAFPGRRLVLAFQPHRYTRTRDCFDDFVNVLSTVDALVLTEVYAAGEAPISTANGDALSRALRAAGKVEPVFVATVDEVPDALAKLARDGDVVITMGAGSIGGVPGKLAQDTQQKG</sequence>